<keyword id="KW-0030">Aminoacyl-tRNA synthetase</keyword>
<keyword id="KW-0067">ATP-binding</keyword>
<keyword id="KW-0963">Cytoplasm</keyword>
<keyword id="KW-0436">Ligase</keyword>
<keyword id="KW-0479">Metal-binding</keyword>
<keyword id="KW-0547">Nucleotide-binding</keyword>
<keyword id="KW-0648">Protein biosynthesis</keyword>
<keyword id="KW-1185">Reference proteome</keyword>
<keyword id="KW-0694">RNA-binding</keyword>
<keyword id="KW-0820">tRNA-binding</keyword>
<keyword id="KW-0862">Zinc</keyword>
<reference key="1">
    <citation type="journal article" date="2004" name="Genome Res.">
        <title>The complete genome and proteome of Mycoplasma mobile.</title>
        <authorList>
            <person name="Jaffe J.D."/>
            <person name="Stange-Thomann N."/>
            <person name="Smith C."/>
            <person name="DeCaprio D."/>
            <person name="Fisher S."/>
            <person name="Butler J."/>
            <person name="Calvo S."/>
            <person name="Elkins T."/>
            <person name="FitzGerald M.G."/>
            <person name="Hafez N."/>
            <person name="Kodira C.D."/>
            <person name="Major J."/>
            <person name="Wang S."/>
            <person name="Wilkinson J."/>
            <person name="Nicol R."/>
            <person name="Nusbaum C."/>
            <person name="Birren B."/>
            <person name="Berg H.C."/>
            <person name="Church G.M."/>
        </authorList>
    </citation>
    <scope>NUCLEOTIDE SEQUENCE [LARGE SCALE GENOMIC DNA]</scope>
    <source>
        <strain>ATCC 43663 / NCTC 11711 / 163 K</strain>
    </source>
</reference>
<gene>
    <name evidence="1" type="primary">alaS</name>
    <name type="ordered locus">MMOB4390</name>
</gene>
<evidence type="ECO:0000255" key="1">
    <source>
        <dbReference type="HAMAP-Rule" id="MF_00036"/>
    </source>
</evidence>
<protein>
    <recommendedName>
        <fullName evidence="1">Alanine--tRNA ligase</fullName>
        <ecNumber evidence="1">6.1.1.7</ecNumber>
    </recommendedName>
    <alternativeName>
        <fullName evidence="1">Alanyl-tRNA synthetase</fullName>
        <shortName evidence="1">AlaRS</shortName>
    </alternativeName>
</protein>
<name>SYA_MYCM1</name>
<comment type="function">
    <text evidence="1">Catalyzes the attachment of alanine to tRNA(Ala) in a two-step reaction: alanine is first activated by ATP to form Ala-AMP and then transferred to the acceptor end of tRNA(Ala). Also edits incorrectly charged Ser-tRNA(Ala) and Gly-tRNA(Ala) via its editing domain.</text>
</comment>
<comment type="catalytic activity">
    <reaction evidence="1">
        <text>tRNA(Ala) + L-alanine + ATP = L-alanyl-tRNA(Ala) + AMP + diphosphate</text>
        <dbReference type="Rhea" id="RHEA:12540"/>
        <dbReference type="Rhea" id="RHEA-COMP:9657"/>
        <dbReference type="Rhea" id="RHEA-COMP:9923"/>
        <dbReference type="ChEBI" id="CHEBI:30616"/>
        <dbReference type="ChEBI" id="CHEBI:33019"/>
        <dbReference type="ChEBI" id="CHEBI:57972"/>
        <dbReference type="ChEBI" id="CHEBI:78442"/>
        <dbReference type="ChEBI" id="CHEBI:78497"/>
        <dbReference type="ChEBI" id="CHEBI:456215"/>
        <dbReference type="EC" id="6.1.1.7"/>
    </reaction>
</comment>
<comment type="cofactor">
    <cofactor evidence="1">
        <name>Zn(2+)</name>
        <dbReference type="ChEBI" id="CHEBI:29105"/>
    </cofactor>
    <text evidence="1">Binds 1 zinc ion per subunit.</text>
</comment>
<comment type="subcellular location">
    <subcellularLocation>
        <location evidence="1">Cytoplasm</location>
    </subcellularLocation>
</comment>
<comment type="domain">
    <text evidence="1">Consists of three domains; the N-terminal catalytic domain, the editing domain and the C-terminal C-Ala domain. The editing domain removes incorrectly charged amino acids, while the C-Ala domain, along with tRNA(Ala), serves as a bridge to cooperatively bring together the editing and aminoacylation centers thus stimulating deacylation of misacylated tRNAs.</text>
</comment>
<comment type="similarity">
    <text evidence="1">Belongs to the class-II aminoacyl-tRNA synthetase family.</text>
</comment>
<accession>Q6KHK5</accession>
<sequence>MKSKEIRNKWLNFFESKGHLIIPSKSLIPIKDDSLLWINSGVATLKDFFSGKKIPPSKRLTNSQKSIRTNDIENVGKTARHHTFFEMLGNFSIGDYFKKEAINFGFEFIFDVLKFDREKIFFTYFSEDLETLEILKSLNVPDSQIIKGSRKTNFWDMGNGPCGPNLEIFYDRGPKYSNRGIELLKNDIENDRYIEIWNIVFSQFNNDGNGNYELLKQKNIDTGAGLERLACILQDTPTNFETDLFLPIIKEIEKLSIYKYKIDNYFLKDKIQEKINLNFKIISDHLRTAVNAINDGAKPSNNGRGYIIRRLIRRAYRSGIFLGIKGKSFLHKMTQIVRDSLIYDIDVEKVSKIIKKEEEMFSKTISEGINLLKEKIKSKFPKDNSIDIENKSQVAKYFKENNLTFDFSIAFELFSTFGFPVEIIKEILEDEYEIELDISNLPKYLEEHANKSRSENSSAMQKVINSLELVKEKVSEFVGYSTLKTKSKILYLLNETEEIHFTNSENEISYLILDKTPFYATAGGQRHDKGLLIQDKNRIEVLEVFKDKHLNNVHKVKGKILKSELINAEVDSNIRIGLERNHSGTHLVFNALSREFGKEIEQLGSDNNEERLTFDFPLSKKPSWEEIKNVEKRVNEYINMSVDREYIITTLEGAKKLNAVMTLEEQEYMDPNEVRIVNFPKITADLCGGTHIENTKKIETFKIISLDSKGKNKFRIKAITSKKIVEEYLKDEISKNKLVLENLIEKNKSLFQGYKMNFSWSKNLDEQNEQITKHIDQARSDYKKLLKNSENKLEKLESDFSIMKFKNTEIIFDMNLKMASLQSLVATLREKNPKAIVILGSEISKGKFFICVGSKEFSAKDISNIIFEKYKGKGGGNNILSQGSIDKKIEKAEDLFELLKEKGII</sequence>
<feature type="chain" id="PRO_0000075153" description="Alanine--tRNA ligase">
    <location>
        <begin position="1"/>
        <end position="905"/>
    </location>
</feature>
<feature type="binding site" evidence="1">
    <location>
        <position position="582"/>
    </location>
    <ligand>
        <name>Zn(2+)</name>
        <dbReference type="ChEBI" id="CHEBI:29105"/>
    </ligand>
</feature>
<feature type="binding site" evidence="1">
    <location>
        <position position="586"/>
    </location>
    <ligand>
        <name>Zn(2+)</name>
        <dbReference type="ChEBI" id="CHEBI:29105"/>
    </ligand>
</feature>
<feature type="binding site" evidence="1">
    <location>
        <position position="687"/>
    </location>
    <ligand>
        <name>Zn(2+)</name>
        <dbReference type="ChEBI" id="CHEBI:29105"/>
    </ligand>
</feature>
<feature type="binding site" evidence="1">
    <location>
        <position position="691"/>
    </location>
    <ligand>
        <name>Zn(2+)</name>
        <dbReference type="ChEBI" id="CHEBI:29105"/>
    </ligand>
</feature>
<dbReference type="EC" id="6.1.1.7" evidence="1"/>
<dbReference type="EMBL" id="AE017308">
    <property type="protein sequence ID" value="AAT27925.1"/>
    <property type="molecule type" value="Genomic_DNA"/>
</dbReference>
<dbReference type="RefSeq" id="WP_011264959.1">
    <property type="nucleotide sequence ID" value="NC_006908.1"/>
</dbReference>
<dbReference type="SMR" id="Q6KHK5"/>
<dbReference type="STRING" id="267748.MMOB4390"/>
<dbReference type="KEGG" id="mmo:MMOB4390"/>
<dbReference type="eggNOG" id="COG0013">
    <property type="taxonomic scope" value="Bacteria"/>
</dbReference>
<dbReference type="HOGENOM" id="CLU_004485_1_1_14"/>
<dbReference type="OrthoDB" id="9803884at2"/>
<dbReference type="Proteomes" id="UP000009072">
    <property type="component" value="Chromosome"/>
</dbReference>
<dbReference type="GO" id="GO:0005829">
    <property type="term" value="C:cytosol"/>
    <property type="evidence" value="ECO:0007669"/>
    <property type="project" value="TreeGrafter"/>
</dbReference>
<dbReference type="GO" id="GO:0004813">
    <property type="term" value="F:alanine-tRNA ligase activity"/>
    <property type="evidence" value="ECO:0007669"/>
    <property type="project" value="UniProtKB-UniRule"/>
</dbReference>
<dbReference type="GO" id="GO:0002161">
    <property type="term" value="F:aminoacyl-tRNA deacylase activity"/>
    <property type="evidence" value="ECO:0007669"/>
    <property type="project" value="TreeGrafter"/>
</dbReference>
<dbReference type="GO" id="GO:0005524">
    <property type="term" value="F:ATP binding"/>
    <property type="evidence" value="ECO:0007669"/>
    <property type="project" value="UniProtKB-UniRule"/>
</dbReference>
<dbReference type="GO" id="GO:0000049">
    <property type="term" value="F:tRNA binding"/>
    <property type="evidence" value="ECO:0007669"/>
    <property type="project" value="UniProtKB-KW"/>
</dbReference>
<dbReference type="GO" id="GO:0008270">
    <property type="term" value="F:zinc ion binding"/>
    <property type="evidence" value="ECO:0007669"/>
    <property type="project" value="UniProtKB-UniRule"/>
</dbReference>
<dbReference type="GO" id="GO:0006419">
    <property type="term" value="P:alanyl-tRNA aminoacylation"/>
    <property type="evidence" value="ECO:0007669"/>
    <property type="project" value="UniProtKB-UniRule"/>
</dbReference>
<dbReference type="CDD" id="cd00673">
    <property type="entry name" value="AlaRS_core"/>
    <property type="match status" value="1"/>
</dbReference>
<dbReference type="FunFam" id="3.30.930.10:FF:000046">
    <property type="entry name" value="Alanine--tRNA ligase"/>
    <property type="match status" value="1"/>
</dbReference>
<dbReference type="FunFam" id="3.30.980.10:FF:000004">
    <property type="entry name" value="Alanine--tRNA ligase, cytoplasmic"/>
    <property type="match status" value="1"/>
</dbReference>
<dbReference type="Gene3D" id="2.40.30.130">
    <property type="match status" value="1"/>
</dbReference>
<dbReference type="Gene3D" id="3.10.310.40">
    <property type="match status" value="1"/>
</dbReference>
<dbReference type="Gene3D" id="3.30.930.10">
    <property type="entry name" value="Bira Bifunctional Protein, Domain 2"/>
    <property type="match status" value="1"/>
</dbReference>
<dbReference type="Gene3D" id="3.30.980.10">
    <property type="entry name" value="Threonyl-trna Synthetase, Chain A, domain 2"/>
    <property type="match status" value="1"/>
</dbReference>
<dbReference type="HAMAP" id="MF_00036_B">
    <property type="entry name" value="Ala_tRNA_synth_B"/>
    <property type="match status" value="1"/>
</dbReference>
<dbReference type="InterPro" id="IPR045864">
    <property type="entry name" value="aa-tRNA-synth_II/BPL/LPL"/>
</dbReference>
<dbReference type="InterPro" id="IPR002318">
    <property type="entry name" value="Ala-tRNA-lgiase_IIc"/>
</dbReference>
<dbReference type="InterPro" id="IPR018162">
    <property type="entry name" value="Ala-tRNA-ligase_IIc_anticod-bd"/>
</dbReference>
<dbReference type="InterPro" id="IPR018165">
    <property type="entry name" value="Ala-tRNA-synth_IIc_core"/>
</dbReference>
<dbReference type="InterPro" id="IPR018164">
    <property type="entry name" value="Ala-tRNA-synth_IIc_N"/>
</dbReference>
<dbReference type="InterPro" id="IPR050058">
    <property type="entry name" value="Ala-tRNA_ligase"/>
</dbReference>
<dbReference type="InterPro" id="IPR023033">
    <property type="entry name" value="Ala_tRNA_ligase_euk/bac"/>
</dbReference>
<dbReference type="InterPro" id="IPR003156">
    <property type="entry name" value="DHHA1_dom"/>
</dbReference>
<dbReference type="InterPro" id="IPR018163">
    <property type="entry name" value="Thr/Ala-tRNA-synth_IIc_edit"/>
</dbReference>
<dbReference type="InterPro" id="IPR009000">
    <property type="entry name" value="Transl_B-barrel_sf"/>
</dbReference>
<dbReference type="InterPro" id="IPR012947">
    <property type="entry name" value="tRNA_SAD"/>
</dbReference>
<dbReference type="NCBIfam" id="TIGR00344">
    <property type="entry name" value="alaS"/>
    <property type="match status" value="1"/>
</dbReference>
<dbReference type="PANTHER" id="PTHR11777:SF9">
    <property type="entry name" value="ALANINE--TRNA LIGASE, CYTOPLASMIC"/>
    <property type="match status" value="1"/>
</dbReference>
<dbReference type="PANTHER" id="PTHR11777">
    <property type="entry name" value="ALANYL-TRNA SYNTHETASE"/>
    <property type="match status" value="1"/>
</dbReference>
<dbReference type="Pfam" id="PF02272">
    <property type="entry name" value="DHHA1"/>
    <property type="match status" value="1"/>
</dbReference>
<dbReference type="Pfam" id="PF01411">
    <property type="entry name" value="tRNA-synt_2c"/>
    <property type="match status" value="1"/>
</dbReference>
<dbReference type="Pfam" id="PF07973">
    <property type="entry name" value="tRNA_SAD"/>
    <property type="match status" value="1"/>
</dbReference>
<dbReference type="PRINTS" id="PR00980">
    <property type="entry name" value="TRNASYNTHALA"/>
</dbReference>
<dbReference type="SMART" id="SM00863">
    <property type="entry name" value="tRNA_SAD"/>
    <property type="match status" value="1"/>
</dbReference>
<dbReference type="SUPFAM" id="SSF55681">
    <property type="entry name" value="Class II aaRS and biotin synthetases"/>
    <property type="match status" value="1"/>
</dbReference>
<dbReference type="SUPFAM" id="SSF101353">
    <property type="entry name" value="Putative anticodon-binding domain of alanyl-tRNA synthetase (AlaRS)"/>
    <property type="match status" value="1"/>
</dbReference>
<dbReference type="SUPFAM" id="SSF55186">
    <property type="entry name" value="ThrRS/AlaRS common domain"/>
    <property type="match status" value="1"/>
</dbReference>
<dbReference type="SUPFAM" id="SSF50447">
    <property type="entry name" value="Translation proteins"/>
    <property type="match status" value="1"/>
</dbReference>
<dbReference type="PROSITE" id="PS50860">
    <property type="entry name" value="AA_TRNA_LIGASE_II_ALA"/>
    <property type="match status" value="1"/>
</dbReference>
<proteinExistence type="inferred from homology"/>
<organism>
    <name type="scientific">Mycoplasma mobile (strain ATCC 43663 / 163K / NCTC 11711)</name>
    <name type="common">Mesomycoplasma mobile</name>
    <dbReference type="NCBI Taxonomy" id="267748"/>
    <lineage>
        <taxon>Bacteria</taxon>
        <taxon>Bacillati</taxon>
        <taxon>Mycoplasmatota</taxon>
        <taxon>Mycoplasmoidales</taxon>
        <taxon>Metamycoplasmataceae</taxon>
        <taxon>Mesomycoplasma</taxon>
    </lineage>
</organism>